<name>RIMO_SYNWW</name>
<comment type="function">
    <text evidence="1">Catalyzes the methylthiolation of an aspartic acid residue of ribosomal protein uS12.</text>
</comment>
<comment type="catalytic activity">
    <reaction evidence="1">
        <text>L-aspartate(89)-[ribosomal protein uS12]-hydrogen + (sulfur carrier)-SH + AH2 + 2 S-adenosyl-L-methionine = 3-methylsulfanyl-L-aspartate(89)-[ribosomal protein uS12]-hydrogen + (sulfur carrier)-H + 5'-deoxyadenosine + L-methionine + A + S-adenosyl-L-homocysteine + 2 H(+)</text>
        <dbReference type="Rhea" id="RHEA:37087"/>
        <dbReference type="Rhea" id="RHEA-COMP:10460"/>
        <dbReference type="Rhea" id="RHEA-COMP:10461"/>
        <dbReference type="Rhea" id="RHEA-COMP:14737"/>
        <dbReference type="Rhea" id="RHEA-COMP:14739"/>
        <dbReference type="ChEBI" id="CHEBI:13193"/>
        <dbReference type="ChEBI" id="CHEBI:15378"/>
        <dbReference type="ChEBI" id="CHEBI:17319"/>
        <dbReference type="ChEBI" id="CHEBI:17499"/>
        <dbReference type="ChEBI" id="CHEBI:29917"/>
        <dbReference type="ChEBI" id="CHEBI:29961"/>
        <dbReference type="ChEBI" id="CHEBI:57844"/>
        <dbReference type="ChEBI" id="CHEBI:57856"/>
        <dbReference type="ChEBI" id="CHEBI:59789"/>
        <dbReference type="ChEBI" id="CHEBI:64428"/>
        <dbReference type="ChEBI" id="CHEBI:73599"/>
        <dbReference type="EC" id="2.8.4.4"/>
    </reaction>
</comment>
<comment type="cofactor">
    <cofactor evidence="1">
        <name>[4Fe-4S] cluster</name>
        <dbReference type="ChEBI" id="CHEBI:49883"/>
    </cofactor>
    <text evidence="1">Binds 2 [4Fe-4S] clusters. One cluster is coordinated with 3 cysteines and an exchangeable S-adenosyl-L-methionine.</text>
</comment>
<comment type="subcellular location">
    <subcellularLocation>
        <location evidence="1">Cytoplasm</location>
    </subcellularLocation>
</comment>
<comment type="similarity">
    <text evidence="1">Belongs to the methylthiotransferase family. RimO subfamily.</text>
</comment>
<protein>
    <recommendedName>
        <fullName evidence="1">Ribosomal protein uS12 methylthiotransferase RimO</fullName>
        <shortName evidence="1">uS12 MTTase</shortName>
        <shortName evidence="1">uS12 methylthiotransferase</shortName>
        <ecNumber evidence="1">2.8.4.4</ecNumber>
    </recommendedName>
    <alternativeName>
        <fullName evidence="1">Ribosomal protein uS12 (aspartate-C(3))-methylthiotransferase</fullName>
    </alternativeName>
    <alternativeName>
        <fullName evidence="1">Ribosome maturation factor RimO</fullName>
    </alternativeName>
</protein>
<keyword id="KW-0004">4Fe-4S</keyword>
<keyword id="KW-0963">Cytoplasm</keyword>
<keyword id="KW-0408">Iron</keyword>
<keyword id="KW-0411">Iron-sulfur</keyword>
<keyword id="KW-0479">Metal-binding</keyword>
<keyword id="KW-1185">Reference proteome</keyword>
<keyword id="KW-0949">S-adenosyl-L-methionine</keyword>
<keyword id="KW-0808">Transferase</keyword>
<reference key="1">
    <citation type="journal article" date="2010" name="Environ. Microbiol.">
        <title>The genome of Syntrophomonas wolfei: new insights into syntrophic metabolism and biohydrogen production.</title>
        <authorList>
            <person name="Sieber J.R."/>
            <person name="Sims D.R."/>
            <person name="Han C."/>
            <person name="Kim E."/>
            <person name="Lykidis A."/>
            <person name="Lapidus A.L."/>
            <person name="McDonnald E."/>
            <person name="Rohlin L."/>
            <person name="Culley D.E."/>
            <person name="Gunsalus R."/>
            <person name="McInerney M.J."/>
        </authorList>
    </citation>
    <scope>NUCLEOTIDE SEQUENCE [LARGE SCALE GENOMIC DNA]</scope>
    <source>
        <strain>DSM 2245B / Goettingen</strain>
    </source>
</reference>
<feature type="chain" id="PRO_0000375041" description="Ribosomal protein uS12 methylthiotransferase RimO">
    <location>
        <begin position="1"/>
        <end position="439"/>
    </location>
</feature>
<feature type="domain" description="MTTase N-terminal" evidence="1">
    <location>
        <begin position="1"/>
        <end position="117"/>
    </location>
</feature>
<feature type="domain" description="Radical SAM core" evidence="2">
    <location>
        <begin position="140"/>
        <end position="370"/>
    </location>
</feature>
<feature type="domain" description="TRAM" evidence="1">
    <location>
        <begin position="373"/>
        <end position="439"/>
    </location>
</feature>
<feature type="binding site" evidence="1">
    <location>
        <position position="10"/>
    </location>
    <ligand>
        <name>[4Fe-4S] cluster</name>
        <dbReference type="ChEBI" id="CHEBI:49883"/>
        <label>1</label>
    </ligand>
</feature>
<feature type="binding site" evidence="1">
    <location>
        <position position="46"/>
    </location>
    <ligand>
        <name>[4Fe-4S] cluster</name>
        <dbReference type="ChEBI" id="CHEBI:49883"/>
        <label>1</label>
    </ligand>
</feature>
<feature type="binding site" evidence="1">
    <location>
        <position position="80"/>
    </location>
    <ligand>
        <name>[4Fe-4S] cluster</name>
        <dbReference type="ChEBI" id="CHEBI:49883"/>
        <label>1</label>
    </ligand>
</feature>
<feature type="binding site" evidence="1">
    <location>
        <position position="154"/>
    </location>
    <ligand>
        <name>[4Fe-4S] cluster</name>
        <dbReference type="ChEBI" id="CHEBI:49883"/>
        <label>2</label>
        <note>4Fe-4S-S-AdoMet</note>
    </ligand>
</feature>
<feature type="binding site" evidence="1">
    <location>
        <position position="158"/>
    </location>
    <ligand>
        <name>[4Fe-4S] cluster</name>
        <dbReference type="ChEBI" id="CHEBI:49883"/>
        <label>2</label>
        <note>4Fe-4S-S-AdoMet</note>
    </ligand>
</feature>
<feature type="binding site" evidence="1">
    <location>
        <position position="161"/>
    </location>
    <ligand>
        <name>[4Fe-4S] cluster</name>
        <dbReference type="ChEBI" id="CHEBI:49883"/>
        <label>2</label>
        <note>4Fe-4S-S-AdoMet</note>
    </ligand>
</feature>
<gene>
    <name evidence="1" type="primary">rimO</name>
    <name type="ordered locus">Swol_1262</name>
</gene>
<evidence type="ECO:0000255" key="1">
    <source>
        <dbReference type="HAMAP-Rule" id="MF_01865"/>
    </source>
</evidence>
<evidence type="ECO:0000255" key="2">
    <source>
        <dbReference type="PROSITE-ProRule" id="PRU01266"/>
    </source>
</evidence>
<dbReference type="EC" id="2.8.4.4" evidence="1"/>
<dbReference type="EMBL" id="CP000448">
    <property type="protein sequence ID" value="ABI68571.1"/>
    <property type="molecule type" value="Genomic_DNA"/>
</dbReference>
<dbReference type="RefSeq" id="WP_011640673.1">
    <property type="nucleotide sequence ID" value="NC_008346.1"/>
</dbReference>
<dbReference type="SMR" id="Q0AXI3"/>
<dbReference type="STRING" id="335541.Swol_1262"/>
<dbReference type="KEGG" id="swo:Swol_1262"/>
<dbReference type="eggNOG" id="COG0621">
    <property type="taxonomic scope" value="Bacteria"/>
</dbReference>
<dbReference type="HOGENOM" id="CLU_018697_0_1_9"/>
<dbReference type="OrthoDB" id="9805215at2"/>
<dbReference type="Proteomes" id="UP000001968">
    <property type="component" value="Chromosome"/>
</dbReference>
<dbReference type="GO" id="GO:0005829">
    <property type="term" value="C:cytosol"/>
    <property type="evidence" value="ECO:0007669"/>
    <property type="project" value="TreeGrafter"/>
</dbReference>
<dbReference type="GO" id="GO:0051539">
    <property type="term" value="F:4 iron, 4 sulfur cluster binding"/>
    <property type="evidence" value="ECO:0007669"/>
    <property type="project" value="UniProtKB-UniRule"/>
</dbReference>
<dbReference type="GO" id="GO:0035599">
    <property type="term" value="F:aspartic acid methylthiotransferase activity"/>
    <property type="evidence" value="ECO:0007669"/>
    <property type="project" value="TreeGrafter"/>
</dbReference>
<dbReference type="GO" id="GO:0046872">
    <property type="term" value="F:metal ion binding"/>
    <property type="evidence" value="ECO:0007669"/>
    <property type="project" value="UniProtKB-KW"/>
</dbReference>
<dbReference type="GO" id="GO:0103039">
    <property type="term" value="F:protein methylthiotransferase activity"/>
    <property type="evidence" value="ECO:0007669"/>
    <property type="project" value="UniProtKB-EC"/>
</dbReference>
<dbReference type="GO" id="GO:0006400">
    <property type="term" value="P:tRNA modification"/>
    <property type="evidence" value="ECO:0007669"/>
    <property type="project" value="InterPro"/>
</dbReference>
<dbReference type="CDD" id="cd01335">
    <property type="entry name" value="Radical_SAM"/>
    <property type="match status" value="1"/>
</dbReference>
<dbReference type="FunFam" id="3.80.30.20:FF:000001">
    <property type="entry name" value="tRNA-2-methylthio-N(6)-dimethylallyladenosine synthase 2"/>
    <property type="match status" value="1"/>
</dbReference>
<dbReference type="Gene3D" id="3.40.50.12160">
    <property type="entry name" value="Methylthiotransferase, N-terminal domain"/>
    <property type="match status" value="1"/>
</dbReference>
<dbReference type="Gene3D" id="2.40.50.140">
    <property type="entry name" value="Nucleic acid-binding proteins"/>
    <property type="match status" value="1"/>
</dbReference>
<dbReference type="Gene3D" id="3.80.30.20">
    <property type="entry name" value="tm_1862 like domain"/>
    <property type="match status" value="1"/>
</dbReference>
<dbReference type="HAMAP" id="MF_01865">
    <property type="entry name" value="MTTase_RimO"/>
    <property type="match status" value="1"/>
</dbReference>
<dbReference type="InterPro" id="IPR006638">
    <property type="entry name" value="Elp3/MiaA/NifB-like_rSAM"/>
</dbReference>
<dbReference type="InterPro" id="IPR005839">
    <property type="entry name" value="Methylthiotransferase"/>
</dbReference>
<dbReference type="InterPro" id="IPR020612">
    <property type="entry name" value="Methylthiotransferase_CS"/>
</dbReference>
<dbReference type="InterPro" id="IPR013848">
    <property type="entry name" value="Methylthiotransferase_N"/>
</dbReference>
<dbReference type="InterPro" id="IPR038135">
    <property type="entry name" value="Methylthiotransferase_N_sf"/>
</dbReference>
<dbReference type="InterPro" id="IPR012340">
    <property type="entry name" value="NA-bd_OB-fold"/>
</dbReference>
<dbReference type="InterPro" id="IPR005840">
    <property type="entry name" value="Ribosomal_uS12_MeSTrfase_RimO"/>
</dbReference>
<dbReference type="InterPro" id="IPR007197">
    <property type="entry name" value="rSAM"/>
</dbReference>
<dbReference type="InterPro" id="IPR023404">
    <property type="entry name" value="rSAM_horseshoe"/>
</dbReference>
<dbReference type="InterPro" id="IPR002792">
    <property type="entry name" value="TRAM_dom"/>
</dbReference>
<dbReference type="NCBIfam" id="TIGR01125">
    <property type="entry name" value="30S ribosomal protein S12 methylthiotransferase RimO"/>
    <property type="match status" value="1"/>
</dbReference>
<dbReference type="NCBIfam" id="TIGR00089">
    <property type="entry name" value="MiaB/RimO family radical SAM methylthiotransferase"/>
    <property type="match status" value="1"/>
</dbReference>
<dbReference type="PANTHER" id="PTHR43837">
    <property type="entry name" value="RIBOSOMAL PROTEIN S12 METHYLTHIOTRANSFERASE RIMO"/>
    <property type="match status" value="1"/>
</dbReference>
<dbReference type="PANTHER" id="PTHR43837:SF1">
    <property type="entry name" value="RIBOSOMAL PROTEIN US12 METHYLTHIOTRANSFERASE RIMO"/>
    <property type="match status" value="1"/>
</dbReference>
<dbReference type="Pfam" id="PF04055">
    <property type="entry name" value="Radical_SAM"/>
    <property type="match status" value="1"/>
</dbReference>
<dbReference type="Pfam" id="PF18693">
    <property type="entry name" value="TRAM_2"/>
    <property type="match status" value="1"/>
</dbReference>
<dbReference type="Pfam" id="PF00919">
    <property type="entry name" value="UPF0004"/>
    <property type="match status" value="1"/>
</dbReference>
<dbReference type="SFLD" id="SFLDG01082">
    <property type="entry name" value="B12-binding_domain_containing"/>
    <property type="match status" value="1"/>
</dbReference>
<dbReference type="SFLD" id="SFLDS00029">
    <property type="entry name" value="Radical_SAM"/>
    <property type="match status" value="1"/>
</dbReference>
<dbReference type="SFLD" id="SFLDF00274">
    <property type="entry name" value="ribosomal_protein_S12_methylth"/>
    <property type="match status" value="1"/>
</dbReference>
<dbReference type="SMART" id="SM00729">
    <property type="entry name" value="Elp3"/>
    <property type="match status" value="1"/>
</dbReference>
<dbReference type="SUPFAM" id="SSF102114">
    <property type="entry name" value="Radical SAM enzymes"/>
    <property type="match status" value="1"/>
</dbReference>
<dbReference type="PROSITE" id="PS51449">
    <property type="entry name" value="MTTASE_N"/>
    <property type="match status" value="1"/>
</dbReference>
<dbReference type="PROSITE" id="PS01278">
    <property type="entry name" value="MTTASE_RADICAL"/>
    <property type="match status" value="1"/>
</dbReference>
<dbReference type="PROSITE" id="PS51918">
    <property type="entry name" value="RADICAL_SAM"/>
    <property type="match status" value="1"/>
</dbReference>
<sequence>MNIGFISLGCSKNRVDTEVMMAALKKAGHRIVNSLERADLVVVNTCGFITPAKEESIEAIIETAELKKKGSLQFLIAAGCLSQRYGRELLLEIPELDGVFGISSVSSIAGVVNRIAQGERVCFTEATPTEYFEKGHRILTTPPGSAYLKISEGCNNSCSYCVIPSIRGKLRSRQINELLNEAAQLLKMGIKELVLVAQDTSAYGHDISPQSALPTLLRELSKLDGLEWIRLMYLHPLYLSDDIIDVVAYENKVLPYLDIPIQHASSKILKLMHRRHDNSHLRTMISKLRARIPNLTLRTTVMLGFPGEEEKDFAELYEFVAESQFDWLGAFSFVPEEGSKAALLPNQIEDEIKAERKDKILRLQQKITRQKNLARINTQEKVLISSQLSKNLFVGRTYFQAPEVDGLTLVKTDFKLTKGDFVDVQLVGVRNYDMIGEYQ</sequence>
<accession>Q0AXI3</accession>
<organism>
    <name type="scientific">Syntrophomonas wolfei subsp. wolfei (strain DSM 2245B / Goettingen)</name>
    <dbReference type="NCBI Taxonomy" id="335541"/>
    <lineage>
        <taxon>Bacteria</taxon>
        <taxon>Bacillati</taxon>
        <taxon>Bacillota</taxon>
        <taxon>Clostridia</taxon>
        <taxon>Eubacteriales</taxon>
        <taxon>Syntrophomonadaceae</taxon>
        <taxon>Syntrophomonas</taxon>
    </lineage>
</organism>
<proteinExistence type="inferred from homology"/>